<reference key="1">
    <citation type="submission" date="2007-02" db="EMBL/GenBank/DDBJ databases">
        <authorList>
            <consortium name="NIH - Mammalian Gene Collection (MGC) project"/>
        </authorList>
    </citation>
    <scope>NUCLEOTIDE SEQUENCE [LARGE SCALE MRNA]</scope>
    <source>
        <strain>Hereford</strain>
        <tissue>Basal ganglia</tissue>
    </source>
</reference>
<protein>
    <recommendedName>
        <fullName evidence="1">Vesicle-associated membrane protein-associated protein B</fullName>
        <shortName>VAMP-B</shortName>
        <shortName>VAMP-associated protein B</shortName>
        <shortName>VAP-B</shortName>
    </recommendedName>
</protein>
<proteinExistence type="evidence at transcript level"/>
<sequence>MAKVEQVLSLEPQHELKFRGPFTDVVTTNLKLGNPTDRNVCFKVKTTAPRRYCVRPNSGIIDAGASINVSVMLQPFDYDPNEKSKHKFMVQSMFAPTDTSDMEAVWKEAKPEDLMDSKLRCVFELPAENDKPHDVEINKIIPTTASKTETPTVSKALSSSLDDTEVKKVMEECKRLQSEVQRLREENKQFKEEDGLRMRKTAQSNSPAPASAMAGKEEGLSTRLLALVVLFFIVGVIIGKIAL</sequence>
<gene>
    <name evidence="1" type="primary">VAPB</name>
</gene>
<organism>
    <name type="scientific">Bos taurus</name>
    <name type="common">Bovine</name>
    <dbReference type="NCBI Taxonomy" id="9913"/>
    <lineage>
        <taxon>Eukaryota</taxon>
        <taxon>Metazoa</taxon>
        <taxon>Chordata</taxon>
        <taxon>Craniata</taxon>
        <taxon>Vertebrata</taxon>
        <taxon>Euteleostomi</taxon>
        <taxon>Mammalia</taxon>
        <taxon>Eutheria</taxon>
        <taxon>Laurasiatheria</taxon>
        <taxon>Artiodactyla</taxon>
        <taxon>Ruminantia</taxon>
        <taxon>Pecora</taxon>
        <taxon>Bovidae</taxon>
        <taxon>Bovinae</taxon>
        <taxon>Bos</taxon>
    </lineage>
</organism>
<dbReference type="EMBL" id="BC133497">
    <property type="protein sequence ID" value="AAI33498.1"/>
    <property type="molecule type" value="mRNA"/>
</dbReference>
<dbReference type="RefSeq" id="NP_001075892.1">
    <property type="nucleotide sequence ID" value="NM_001082423.1"/>
</dbReference>
<dbReference type="BMRB" id="A2VDZ9"/>
<dbReference type="SMR" id="A2VDZ9"/>
<dbReference type="FunCoup" id="A2VDZ9">
    <property type="interactions" value="2488"/>
</dbReference>
<dbReference type="STRING" id="9913.ENSBTAP00000023164"/>
<dbReference type="PaxDb" id="9913-ENSBTAP00000023164"/>
<dbReference type="PeptideAtlas" id="A2VDZ9"/>
<dbReference type="Ensembl" id="ENSBTAT00000023164.5">
    <property type="protein sequence ID" value="ENSBTAP00000023164.4"/>
    <property type="gene ID" value="ENSBTAG00000017424.6"/>
</dbReference>
<dbReference type="GeneID" id="326580"/>
<dbReference type="KEGG" id="bta:326580"/>
<dbReference type="CTD" id="9217"/>
<dbReference type="VEuPathDB" id="HostDB:ENSBTAG00000017424"/>
<dbReference type="VGNC" id="VGNC:36764">
    <property type="gene designation" value="VAPB"/>
</dbReference>
<dbReference type="eggNOG" id="KOG0439">
    <property type="taxonomic scope" value="Eukaryota"/>
</dbReference>
<dbReference type="GeneTree" id="ENSGT00940000155769"/>
<dbReference type="HOGENOM" id="CLU_032848_0_1_1"/>
<dbReference type="InParanoid" id="A2VDZ9"/>
<dbReference type="OMA" id="AENAKPH"/>
<dbReference type="OrthoDB" id="264603at2759"/>
<dbReference type="TreeFam" id="TF317024"/>
<dbReference type="Reactome" id="R-BTA-1660661">
    <property type="pathway name" value="Sphingolipid de novo biosynthesis"/>
</dbReference>
<dbReference type="Reactome" id="R-BTA-8980692">
    <property type="pathway name" value="RHOA GTPase cycle"/>
</dbReference>
<dbReference type="Reactome" id="R-BTA-9013106">
    <property type="pathway name" value="RHOC GTPase cycle"/>
</dbReference>
<dbReference type="Reactome" id="R-BTA-9013404">
    <property type="pathway name" value="RAC2 GTPase cycle"/>
</dbReference>
<dbReference type="Reactome" id="R-BTA-9013405">
    <property type="pathway name" value="RHOD GTPase cycle"/>
</dbReference>
<dbReference type="Reactome" id="R-BTA-9013408">
    <property type="pathway name" value="RHOG GTPase cycle"/>
</dbReference>
<dbReference type="Proteomes" id="UP000009136">
    <property type="component" value="Chromosome 13"/>
</dbReference>
<dbReference type="Bgee" id="ENSBTAG00000017424">
    <property type="expression patterns" value="Expressed in hypothalamus and 102 other cell types or tissues"/>
</dbReference>
<dbReference type="GO" id="GO:0005789">
    <property type="term" value="C:endoplasmic reticulum membrane"/>
    <property type="evidence" value="ECO:0000250"/>
    <property type="project" value="UniProtKB"/>
</dbReference>
<dbReference type="GO" id="GO:0005886">
    <property type="term" value="C:plasma membrane"/>
    <property type="evidence" value="ECO:0000318"/>
    <property type="project" value="GO_Central"/>
</dbReference>
<dbReference type="GO" id="GO:0043495">
    <property type="term" value="F:protein-membrane adaptor activity"/>
    <property type="evidence" value="ECO:0000318"/>
    <property type="project" value="GO_Central"/>
</dbReference>
<dbReference type="GO" id="GO:0090158">
    <property type="term" value="P:endoplasmic reticulum membrane organization"/>
    <property type="evidence" value="ECO:0000318"/>
    <property type="project" value="GO_Central"/>
</dbReference>
<dbReference type="GO" id="GO:0061817">
    <property type="term" value="P:endoplasmic reticulum-plasma membrane tethering"/>
    <property type="evidence" value="ECO:0000318"/>
    <property type="project" value="GO_Central"/>
</dbReference>
<dbReference type="GO" id="GO:0006874">
    <property type="term" value="P:intracellular calcium ion homeostasis"/>
    <property type="evidence" value="ECO:0000250"/>
    <property type="project" value="UniProtKB"/>
</dbReference>
<dbReference type="GO" id="GO:0036498">
    <property type="term" value="P:IRE1-mediated unfolded protein response"/>
    <property type="evidence" value="ECO:0000250"/>
    <property type="project" value="UniProtKB"/>
</dbReference>
<dbReference type="FunFam" id="2.60.40.10:FF:000334">
    <property type="entry name" value="vesicle-associated membrane protein-associated protein A isoform X1"/>
    <property type="match status" value="1"/>
</dbReference>
<dbReference type="Gene3D" id="2.60.40.10">
    <property type="entry name" value="Immunoglobulins"/>
    <property type="match status" value="1"/>
</dbReference>
<dbReference type="InterPro" id="IPR013783">
    <property type="entry name" value="Ig-like_fold"/>
</dbReference>
<dbReference type="InterPro" id="IPR000535">
    <property type="entry name" value="MSP_dom"/>
</dbReference>
<dbReference type="InterPro" id="IPR008962">
    <property type="entry name" value="PapD-like_sf"/>
</dbReference>
<dbReference type="InterPro" id="IPR016763">
    <property type="entry name" value="VAP"/>
</dbReference>
<dbReference type="PANTHER" id="PTHR10809">
    <property type="entry name" value="VESICLE-ASSOCIATED MEMBRANE PROTEIN-ASSOCIATED PROTEIN"/>
    <property type="match status" value="1"/>
</dbReference>
<dbReference type="PANTHER" id="PTHR10809:SF12">
    <property type="entry name" value="VESICLE-ASSOCIATED MEMBRANE PROTEIN-ASSOCIATED PROTEIN B_C"/>
    <property type="match status" value="1"/>
</dbReference>
<dbReference type="Pfam" id="PF00635">
    <property type="entry name" value="Motile_Sperm"/>
    <property type="match status" value="1"/>
</dbReference>
<dbReference type="PIRSF" id="PIRSF019693">
    <property type="entry name" value="VAMP-associated"/>
    <property type="match status" value="1"/>
</dbReference>
<dbReference type="SUPFAM" id="SSF49354">
    <property type="entry name" value="PapD-like"/>
    <property type="match status" value="1"/>
</dbReference>
<dbReference type="PROSITE" id="PS50202">
    <property type="entry name" value="MSP"/>
    <property type="match status" value="1"/>
</dbReference>
<feature type="initiator methionine" description="Removed" evidence="1">
    <location>
        <position position="1"/>
    </location>
</feature>
<feature type="chain" id="PRO_0000308177" description="Vesicle-associated membrane protein-associated protein B">
    <location>
        <begin position="2"/>
        <end position="243"/>
    </location>
</feature>
<feature type="topological domain" description="Cytoplasmic" evidence="3">
    <location>
        <begin position="2"/>
        <end position="218"/>
    </location>
</feature>
<feature type="transmembrane region" description="Helical; Anchor for type IV membrane protein" evidence="3">
    <location>
        <begin position="219"/>
        <end position="239"/>
    </location>
</feature>
<feature type="domain" description="MSP" evidence="4">
    <location>
        <begin position="7"/>
        <end position="124"/>
    </location>
</feature>
<feature type="region of interest" description="Disordered" evidence="5">
    <location>
        <begin position="186"/>
        <end position="214"/>
    </location>
</feature>
<feature type="coiled-coil region" evidence="3">
    <location>
        <begin position="161"/>
        <end position="196"/>
    </location>
</feature>
<feature type="compositionally biased region" description="Basic and acidic residues" evidence="5">
    <location>
        <begin position="186"/>
        <end position="197"/>
    </location>
</feature>
<feature type="site" description="Involved in binding the phosphorylated serine of the phospho-FFAT motif" evidence="1">
    <location>
        <position position="43"/>
    </location>
</feature>
<feature type="modified residue" description="N-acetylalanine" evidence="1">
    <location>
        <position position="2"/>
    </location>
</feature>
<feature type="modified residue" description="Phosphoserine" evidence="1">
    <location>
        <position position="146"/>
    </location>
</feature>
<feature type="modified residue" description="Phosphothreonine" evidence="1">
    <location>
        <position position="150"/>
    </location>
</feature>
<feature type="modified residue" description="Phosphoserine" evidence="1">
    <location>
        <position position="158"/>
    </location>
</feature>
<feature type="modified residue" description="Phosphoserine" evidence="1">
    <location>
        <position position="159"/>
    </location>
</feature>
<feature type="modified residue" description="Phosphoserine" evidence="1">
    <location>
        <position position="160"/>
    </location>
</feature>
<feature type="modified residue" description="Phosphoserine" evidence="1">
    <location>
        <position position="206"/>
    </location>
</feature>
<feature type="cross-link" description="Glycyl lysine isopeptide (Lys-Gly) (interchain with G-Cter in SUMO1)" evidence="1">
    <location>
        <position position="147"/>
    </location>
</feature>
<accession>A2VDZ9</accession>
<evidence type="ECO:0000250" key="1">
    <source>
        <dbReference type="UniProtKB" id="O95292"/>
    </source>
</evidence>
<evidence type="ECO:0000250" key="2">
    <source>
        <dbReference type="UniProtKB" id="Q9P0L0"/>
    </source>
</evidence>
<evidence type="ECO:0000255" key="3"/>
<evidence type="ECO:0000255" key="4">
    <source>
        <dbReference type="PROSITE-ProRule" id="PRU00132"/>
    </source>
</evidence>
<evidence type="ECO:0000256" key="5">
    <source>
        <dbReference type="SAM" id="MobiDB-lite"/>
    </source>
</evidence>
<evidence type="ECO:0000305" key="6"/>
<name>VAPB_BOVIN</name>
<keyword id="KW-0007">Acetylation</keyword>
<keyword id="KW-0175">Coiled coil</keyword>
<keyword id="KW-0256">Endoplasmic reticulum</keyword>
<keyword id="KW-1017">Isopeptide bond</keyword>
<keyword id="KW-0472">Membrane</keyword>
<keyword id="KW-0597">Phosphoprotein</keyword>
<keyword id="KW-1185">Reference proteome</keyword>
<keyword id="KW-0812">Transmembrane</keyword>
<keyword id="KW-1133">Transmembrane helix</keyword>
<keyword id="KW-0832">Ubl conjugation</keyword>
<keyword id="KW-0834">Unfolded protein response</keyword>
<comment type="function">
    <text evidence="1">Endoplasmic reticulum (ER)-anchored protein that mediates the formation of contact sites between the ER and endosomes via interaction with FFAT motif-containing proteins such as STARD3 or WDR44. Interacts with STARD3 in a FFAT motif phosphorylation dependent manner. Via interaction with WDR44 participates in neosynthesized protein export. Participates in the endoplasmic reticulum unfolded protein response (UPR) by inducing ERN1/IRE1 activity. Involved in cellular calcium homeostasis regulation.</text>
</comment>
<comment type="subunit">
    <text evidence="1">Homodimer, and heterodimer with VAPA. Interacts with VAMP1 and VAMP2. Interacts (via MSP domain) with ZFYVE27. Interacts with RMDN3. Interacts with KIF5A in a ZFYVE27-dependent manner. Interacts (via MSP domain) with STARD3 (via phospho-FFAT motif). Interacts with STARD3NL (via FFAT motif). Interacts with CERT1. Interacts with PLEKHA3 and SACM1L to form a ternary complex. Interacts with VPS13A (via FFAT motif). Interacts with RB1CC1 (via phosphorylated FFAT motif), MIGA2 (via phosphorylated FFAT motif), RMDN3 (via phosphorylated FFAT motif), OSBPL1A (via FFAT motif), KCNB1 (via phosphorylated FFAT motif) and KCNB2 (via phosphorylated FFAT motif). Interacts (via MSP domain) with WDR44 (via FFAT motif); the interactions connect the endoplasmic reticulum (ER) with the endosomal tubule (By similarity).</text>
</comment>
<comment type="subcellular location">
    <subcellularLocation>
        <location evidence="1">Endoplasmic reticulum membrane</location>
        <topology evidence="2">Single-pass type IV membrane protein</topology>
    </subcellularLocation>
    <text evidence="1">Present in mitochondria-associated membranes that are endoplasmic reticulum membrane regions closely apposed to the outer mitochondrial membrane.</text>
</comment>
<comment type="domain">
    <text evidence="1">The MSP domain binds the FFAT motif of many proteins.</text>
</comment>
<comment type="similarity">
    <text evidence="6">Belongs to the VAMP-associated protein (VAP) (TC 9.B.17) family.</text>
</comment>